<proteinExistence type="inferred from homology"/>
<name>GATC_BACC3</name>
<reference key="1">
    <citation type="submission" date="2009-02" db="EMBL/GenBank/DDBJ databases">
        <title>Genome sequence of Bacillus cereus 03BB102.</title>
        <authorList>
            <person name="Dodson R.J."/>
            <person name="Jackson P."/>
            <person name="Munk A.C."/>
            <person name="Brettin T."/>
            <person name="Bruce D."/>
            <person name="Detter C."/>
            <person name="Tapia R."/>
            <person name="Han C."/>
            <person name="Sutton G."/>
            <person name="Sims D."/>
        </authorList>
    </citation>
    <scope>NUCLEOTIDE SEQUENCE [LARGE SCALE GENOMIC DNA]</scope>
    <source>
        <strain>03BB102</strain>
    </source>
</reference>
<evidence type="ECO:0000255" key="1">
    <source>
        <dbReference type="HAMAP-Rule" id="MF_00122"/>
    </source>
</evidence>
<organism>
    <name type="scientific">Bacillus cereus (strain 03BB102)</name>
    <dbReference type="NCBI Taxonomy" id="572264"/>
    <lineage>
        <taxon>Bacteria</taxon>
        <taxon>Bacillati</taxon>
        <taxon>Bacillota</taxon>
        <taxon>Bacilli</taxon>
        <taxon>Bacillales</taxon>
        <taxon>Bacillaceae</taxon>
        <taxon>Bacillus</taxon>
        <taxon>Bacillus cereus group</taxon>
    </lineage>
</organism>
<feature type="chain" id="PRO_1000122553" description="Aspartyl/glutamyl-tRNA(Asn/Gln) amidotransferase subunit C">
    <location>
        <begin position="1"/>
        <end position="96"/>
    </location>
</feature>
<dbReference type="EC" id="6.3.5.-" evidence="1"/>
<dbReference type="EMBL" id="CP001407">
    <property type="protein sequence ID" value="ACO29746.1"/>
    <property type="molecule type" value="Genomic_DNA"/>
</dbReference>
<dbReference type="RefSeq" id="WP_000086999.1">
    <property type="nucleotide sequence ID" value="NZ_CP009318.1"/>
</dbReference>
<dbReference type="SMR" id="C1EV87"/>
<dbReference type="GeneID" id="93010705"/>
<dbReference type="KEGG" id="bcx:BCA_0393"/>
<dbReference type="PATRIC" id="fig|572264.18.peg.382"/>
<dbReference type="Proteomes" id="UP000002210">
    <property type="component" value="Chromosome"/>
</dbReference>
<dbReference type="GO" id="GO:0050566">
    <property type="term" value="F:asparaginyl-tRNA synthase (glutamine-hydrolyzing) activity"/>
    <property type="evidence" value="ECO:0007669"/>
    <property type="project" value="RHEA"/>
</dbReference>
<dbReference type="GO" id="GO:0005524">
    <property type="term" value="F:ATP binding"/>
    <property type="evidence" value="ECO:0007669"/>
    <property type="project" value="UniProtKB-KW"/>
</dbReference>
<dbReference type="GO" id="GO:0050567">
    <property type="term" value="F:glutaminyl-tRNA synthase (glutamine-hydrolyzing) activity"/>
    <property type="evidence" value="ECO:0007669"/>
    <property type="project" value="UniProtKB-UniRule"/>
</dbReference>
<dbReference type="GO" id="GO:0070681">
    <property type="term" value="P:glutaminyl-tRNAGln biosynthesis via transamidation"/>
    <property type="evidence" value="ECO:0007669"/>
    <property type="project" value="TreeGrafter"/>
</dbReference>
<dbReference type="GO" id="GO:0006450">
    <property type="term" value="P:regulation of translational fidelity"/>
    <property type="evidence" value="ECO:0007669"/>
    <property type="project" value="InterPro"/>
</dbReference>
<dbReference type="GO" id="GO:0006412">
    <property type="term" value="P:translation"/>
    <property type="evidence" value="ECO:0007669"/>
    <property type="project" value="UniProtKB-UniRule"/>
</dbReference>
<dbReference type="Gene3D" id="1.10.20.60">
    <property type="entry name" value="Glu-tRNAGln amidotransferase C subunit, N-terminal domain"/>
    <property type="match status" value="1"/>
</dbReference>
<dbReference type="HAMAP" id="MF_00122">
    <property type="entry name" value="GatC"/>
    <property type="match status" value="1"/>
</dbReference>
<dbReference type="InterPro" id="IPR036113">
    <property type="entry name" value="Asp/Glu-ADT_sf_sub_c"/>
</dbReference>
<dbReference type="InterPro" id="IPR003837">
    <property type="entry name" value="GatC"/>
</dbReference>
<dbReference type="NCBIfam" id="TIGR00135">
    <property type="entry name" value="gatC"/>
    <property type="match status" value="1"/>
</dbReference>
<dbReference type="PANTHER" id="PTHR15004">
    <property type="entry name" value="GLUTAMYL-TRNA(GLN) AMIDOTRANSFERASE SUBUNIT C, MITOCHONDRIAL"/>
    <property type="match status" value="1"/>
</dbReference>
<dbReference type="PANTHER" id="PTHR15004:SF0">
    <property type="entry name" value="GLUTAMYL-TRNA(GLN) AMIDOTRANSFERASE SUBUNIT C, MITOCHONDRIAL"/>
    <property type="match status" value="1"/>
</dbReference>
<dbReference type="Pfam" id="PF02686">
    <property type="entry name" value="GatC"/>
    <property type="match status" value="1"/>
</dbReference>
<dbReference type="SUPFAM" id="SSF141000">
    <property type="entry name" value="Glu-tRNAGln amidotransferase C subunit"/>
    <property type="match status" value="1"/>
</dbReference>
<accession>C1EV87</accession>
<protein>
    <recommendedName>
        <fullName evidence="1">Aspartyl/glutamyl-tRNA(Asn/Gln) amidotransferase subunit C</fullName>
        <shortName evidence="1">Asp/Glu-ADT subunit C</shortName>
        <ecNumber evidence="1">6.3.5.-</ecNumber>
    </recommendedName>
</protein>
<sequence length="96" mass="10866">MSRISVENVKHVAHLARLAITDQEAEKFQKQLDAIVTFAEQLNELDTTDVKPTTHVLTMKNVMREDVPEKGLPVEEVLKNAPDHKDNQIRVPAVLE</sequence>
<keyword id="KW-0067">ATP-binding</keyword>
<keyword id="KW-0436">Ligase</keyword>
<keyword id="KW-0547">Nucleotide-binding</keyword>
<keyword id="KW-0648">Protein biosynthesis</keyword>
<comment type="function">
    <text evidence="1">Allows the formation of correctly charged Asn-tRNA(Asn) or Gln-tRNA(Gln) through the transamidation of misacylated Asp-tRNA(Asn) or Glu-tRNA(Gln) in organisms which lack either or both of asparaginyl-tRNA or glutaminyl-tRNA synthetases. The reaction takes place in the presence of glutamine and ATP through an activated phospho-Asp-tRNA(Asn) or phospho-Glu-tRNA(Gln).</text>
</comment>
<comment type="catalytic activity">
    <reaction evidence="1">
        <text>L-glutamyl-tRNA(Gln) + L-glutamine + ATP + H2O = L-glutaminyl-tRNA(Gln) + L-glutamate + ADP + phosphate + H(+)</text>
        <dbReference type="Rhea" id="RHEA:17521"/>
        <dbReference type="Rhea" id="RHEA-COMP:9681"/>
        <dbReference type="Rhea" id="RHEA-COMP:9684"/>
        <dbReference type="ChEBI" id="CHEBI:15377"/>
        <dbReference type="ChEBI" id="CHEBI:15378"/>
        <dbReference type="ChEBI" id="CHEBI:29985"/>
        <dbReference type="ChEBI" id="CHEBI:30616"/>
        <dbReference type="ChEBI" id="CHEBI:43474"/>
        <dbReference type="ChEBI" id="CHEBI:58359"/>
        <dbReference type="ChEBI" id="CHEBI:78520"/>
        <dbReference type="ChEBI" id="CHEBI:78521"/>
        <dbReference type="ChEBI" id="CHEBI:456216"/>
    </reaction>
</comment>
<comment type="catalytic activity">
    <reaction evidence="1">
        <text>L-aspartyl-tRNA(Asn) + L-glutamine + ATP + H2O = L-asparaginyl-tRNA(Asn) + L-glutamate + ADP + phosphate + 2 H(+)</text>
        <dbReference type="Rhea" id="RHEA:14513"/>
        <dbReference type="Rhea" id="RHEA-COMP:9674"/>
        <dbReference type="Rhea" id="RHEA-COMP:9677"/>
        <dbReference type="ChEBI" id="CHEBI:15377"/>
        <dbReference type="ChEBI" id="CHEBI:15378"/>
        <dbReference type="ChEBI" id="CHEBI:29985"/>
        <dbReference type="ChEBI" id="CHEBI:30616"/>
        <dbReference type="ChEBI" id="CHEBI:43474"/>
        <dbReference type="ChEBI" id="CHEBI:58359"/>
        <dbReference type="ChEBI" id="CHEBI:78515"/>
        <dbReference type="ChEBI" id="CHEBI:78516"/>
        <dbReference type="ChEBI" id="CHEBI:456216"/>
    </reaction>
</comment>
<comment type="subunit">
    <text evidence="1">Heterotrimer of A, B and C subunits.</text>
</comment>
<comment type="similarity">
    <text evidence="1">Belongs to the GatC family.</text>
</comment>
<gene>
    <name evidence="1" type="primary">gatC</name>
    <name type="ordered locus">BCA_0393</name>
</gene>